<accession>Q0SM66</accession>
<accession>G0IRW8</accession>
<dbReference type="EMBL" id="CP000395">
    <property type="protein sequence ID" value="ABH02062.1"/>
    <property type="molecule type" value="Genomic_DNA"/>
</dbReference>
<dbReference type="EMBL" id="CP002933">
    <property type="protein sequence ID" value="AEL70003.1"/>
    <property type="molecule type" value="Genomic_DNA"/>
</dbReference>
<dbReference type="RefSeq" id="WP_011601225.1">
    <property type="nucleotide sequence ID" value="NC_008277.1"/>
</dbReference>
<dbReference type="SMR" id="Q0SM66"/>
<dbReference type="STRING" id="29518.BLA32_00290"/>
<dbReference type="KEGG" id="baf:BAPKO_0838"/>
<dbReference type="KEGG" id="bafz:BafPKo_0814"/>
<dbReference type="PATRIC" id="fig|390236.22.peg.775"/>
<dbReference type="eggNOG" id="COG1825">
    <property type="taxonomic scope" value="Bacteria"/>
</dbReference>
<dbReference type="HOGENOM" id="CLU_075939_2_1_12"/>
<dbReference type="OrthoDB" id="9790002at2"/>
<dbReference type="Proteomes" id="UP000005216">
    <property type="component" value="Chromosome"/>
</dbReference>
<dbReference type="GO" id="GO:0022625">
    <property type="term" value="C:cytosolic large ribosomal subunit"/>
    <property type="evidence" value="ECO:0007669"/>
    <property type="project" value="TreeGrafter"/>
</dbReference>
<dbReference type="GO" id="GO:0008097">
    <property type="term" value="F:5S rRNA binding"/>
    <property type="evidence" value="ECO:0007669"/>
    <property type="project" value="InterPro"/>
</dbReference>
<dbReference type="GO" id="GO:0003735">
    <property type="term" value="F:structural constituent of ribosome"/>
    <property type="evidence" value="ECO:0007669"/>
    <property type="project" value="InterPro"/>
</dbReference>
<dbReference type="GO" id="GO:0006412">
    <property type="term" value="P:translation"/>
    <property type="evidence" value="ECO:0007669"/>
    <property type="project" value="UniProtKB-UniRule"/>
</dbReference>
<dbReference type="CDD" id="cd00495">
    <property type="entry name" value="Ribosomal_L25_TL5_CTC"/>
    <property type="match status" value="1"/>
</dbReference>
<dbReference type="Gene3D" id="2.170.120.20">
    <property type="entry name" value="Ribosomal protein L25, beta domain"/>
    <property type="match status" value="1"/>
</dbReference>
<dbReference type="Gene3D" id="2.40.240.10">
    <property type="entry name" value="Ribosomal Protein L25, Chain P"/>
    <property type="match status" value="1"/>
</dbReference>
<dbReference type="HAMAP" id="MF_01334">
    <property type="entry name" value="Ribosomal_bL25_CTC"/>
    <property type="match status" value="1"/>
</dbReference>
<dbReference type="InterPro" id="IPR020056">
    <property type="entry name" value="Rbsml_bL25/Gln-tRNA_synth_N"/>
</dbReference>
<dbReference type="InterPro" id="IPR011035">
    <property type="entry name" value="Ribosomal_bL25/Gln-tRNA_synth"/>
</dbReference>
<dbReference type="InterPro" id="IPR020057">
    <property type="entry name" value="Ribosomal_bL25_b-dom"/>
</dbReference>
<dbReference type="InterPro" id="IPR037121">
    <property type="entry name" value="Ribosomal_bL25_C"/>
</dbReference>
<dbReference type="InterPro" id="IPR001021">
    <property type="entry name" value="Ribosomal_bL25_long"/>
</dbReference>
<dbReference type="InterPro" id="IPR029751">
    <property type="entry name" value="Ribosomal_L25_dom"/>
</dbReference>
<dbReference type="InterPro" id="IPR020930">
    <property type="entry name" value="Ribosomal_uL5_bac-type"/>
</dbReference>
<dbReference type="NCBIfam" id="TIGR00731">
    <property type="entry name" value="bL25_bact_ctc"/>
    <property type="match status" value="1"/>
</dbReference>
<dbReference type="NCBIfam" id="NF004135">
    <property type="entry name" value="PRK05618.3-1"/>
    <property type="match status" value="1"/>
</dbReference>
<dbReference type="PANTHER" id="PTHR33284">
    <property type="entry name" value="RIBOSOMAL PROTEIN L25/GLN-TRNA SYNTHETASE, ANTI-CODON-BINDING DOMAIN-CONTAINING PROTEIN"/>
    <property type="match status" value="1"/>
</dbReference>
<dbReference type="PANTHER" id="PTHR33284:SF1">
    <property type="entry name" value="RIBOSOMAL PROTEIN L25_GLN-TRNA SYNTHETASE, ANTI-CODON-BINDING DOMAIN-CONTAINING PROTEIN"/>
    <property type="match status" value="1"/>
</dbReference>
<dbReference type="Pfam" id="PF01386">
    <property type="entry name" value="Ribosomal_L25p"/>
    <property type="match status" value="1"/>
</dbReference>
<dbReference type="Pfam" id="PF14693">
    <property type="entry name" value="Ribosomal_TL5_C"/>
    <property type="match status" value="1"/>
</dbReference>
<dbReference type="SUPFAM" id="SSF50715">
    <property type="entry name" value="Ribosomal protein L25-like"/>
    <property type="match status" value="1"/>
</dbReference>
<reference key="1">
    <citation type="journal article" date="2006" name="BMC Genomics">
        <title>Comparative genome analysis: selection pressure on the Borrelia vls cassettes is essential for infectivity.</title>
        <authorList>
            <person name="Gloeckner G."/>
            <person name="Schulte-Spechtel U."/>
            <person name="Schilhabel M."/>
            <person name="Felder M."/>
            <person name="Suehnel J."/>
            <person name="Wilske B."/>
            <person name="Platzer M."/>
        </authorList>
    </citation>
    <scope>NUCLEOTIDE SEQUENCE [LARGE SCALE GENOMIC DNA]</scope>
    <source>
        <strain>PKo</strain>
    </source>
</reference>
<reference key="2">
    <citation type="journal article" date="2011" name="J. Bacteriol.">
        <title>Whole-genome sequences of two Borrelia afzelii and two Borrelia garinii Lyme disease agent isolates.</title>
        <authorList>
            <person name="Casjens S.R."/>
            <person name="Mongodin E.F."/>
            <person name="Qiu W.G."/>
            <person name="Dunn J.J."/>
            <person name="Luft B.J."/>
            <person name="Fraser-Liggett C.M."/>
            <person name="Schutzer S.E."/>
        </authorList>
    </citation>
    <scope>NUCLEOTIDE SEQUENCE [LARGE SCALE GENOMIC DNA]</scope>
    <source>
        <strain>PKo</strain>
    </source>
</reference>
<gene>
    <name evidence="1" type="primary">rplY</name>
    <name evidence="1" type="synonym">ctc</name>
    <name type="ordered locus">BAPKO_0838</name>
    <name type="ordered locus">BafPKo_0814</name>
</gene>
<protein>
    <recommendedName>
        <fullName evidence="1">Large ribosomal subunit protein bL25</fullName>
    </recommendedName>
    <alternativeName>
        <fullName evidence="2">50S ribosomal protein L25</fullName>
    </alternativeName>
    <alternativeName>
        <fullName evidence="1">General stress protein CTC</fullName>
    </alternativeName>
</protein>
<feature type="chain" id="PRO_1000052869" description="Large ribosomal subunit protein bL25">
    <location>
        <begin position="1"/>
        <end position="182"/>
    </location>
</feature>
<feature type="sequence conflict" description="In Ref. 2; AEL70003." evidence="2" ref="2">
    <original>F</original>
    <variation>V</variation>
    <location>
        <position position="6"/>
    </location>
</feature>
<sequence>MENSRFLSCKYRSSFGSSNARRIRAKCEIPAVVYGQGNDVLHLKIKSSEFNKKFAKFTDNTVLILDDGKVERCVFVKDVAENIASKLIYHIDFYEVDKRVELEKYIPIKLVGASIGVKEGGILTVLKEQVKVRSLPLDLPEFIELDLTPVNKGDSVLLKDLVLPSNVKLAESDDNLEVVIIK</sequence>
<keyword id="KW-0687">Ribonucleoprotein</keyword>
<keyword id="KW-0689">Ribosomal protein</keyword>
<keyword id="KW-0694">RNA-binding</keyword>
<keyword id="KW-0699">rRNA-binding</keyword>
<proteinExistence type="inferred from homology"/>
<evidence type="ECO:0000255" key="1">
    <source>
        <dbReference type="HAMAP-Rule" id="MF_01334"/>
    </source>
</evidence>
<evidence type="ECO:0000305" key="2"/>
<comment type="function">
    <text evidence="1">This is one of the proteins that binds to the 5S RNA in the ribosome where it forms part of the central protuberance.</text>
</comment>
<comment type="subunit">
    <text evidence="1">Part of the 50S ribosomal subunit; part of the 5S rRNA/L5/L18/L25 subcomplex. Contacts the 5S rRNA. Binds to the 5S rRNA independently of L5 and L18.</text>
</comment>
<comment type="similarity">
    <text evidence="1">Belongs to the bacterial ribosomal protein bL25 family. CTC subfamily.</text>
</comment>
<name>RL25_BORAP</name>
<organism>
    <name type="scientific">Borreliella afzelii (strain PKo)</name>
    <name type="common">Borrelia afzelii</name>
    <dbReference type="NCBI Taxonomy" id="390236"/>
    <lineage>
        <taxon>Bacteria</taxon>
        <taxon>Pseudomonadati</taxon>
        <taxon>Spirochaetota</taxon>
        <taxon>Spirochaetia</taxon>
        <taxon>Spirochaetales</taxon>
        <taxon>Borreliaceae</taxon>
        <taxon>Borreliella</taxon>
    </lineage>
</organism>